<dbReference type="EMBL" id="AE016879">
    <property type="protein sequence ID" value="AAP27427.1"/>
    <property type="molecule type" value="Genomic_DNA"/>
</dbReference>
<dbReference type="EMBL" id="AE017334">
    <property type="protein sequence ID" value="AAT32786.1"/>
    <property type="molecule type" value="Genomic_DNA"/>
</dbReference>
<dbReference type="EMBL" id="AE017225">
    <property type="protein sequence ID" value="AAT55716.1"/>
    <property type="molecule type" value="Genomic_DNA"/>
</dbReference>
<dbReference type="RefSeq" id="NP_845941.1">
    <property type="nucleotide sequence ID" value="NC_003997.3"/>
</dbReference>
<dbReference type="RefSeq" id="WP_000518052.1">
    <property type="nucleotide sequence ID" value="NZ_WXXJ01000029.1"/>
</dbReference>
<dbReference type="RefSeq" id="YP_029665.1">
    <property type="nucleotide sequence ID" value="NC_005945.1"/>
</dbReference>
<dbReference type="STRING" id="261594.GBAA_3678"/>
<dbReference type="DNASU" id="1089256"/>
<dbReference type="GeneID" id="93007567"/>
<dbReference type="KEGG" id="ban:BA_3678"/>
<dbReference type="KEGG" id="bar:GBAA_3678"/>
<dbReference type="KEGG" id="bat:BAS3409"/>
<dbReference type="PATRIC" id="fig|198094.11.peg.3649"/>
<dbReference type="HOGENOM" id="CLU_206342_0_0_9"/>
<dbReference type="OrthoDB" id="2692139at2"/>
<dbReference type="Proteomes" id="UP000000427">
    <property type="component" value="Chromosome"/>
</dbReference>
<dbReference type="Proteomes" id="UP000000594">
    <property type="component" value="Chromosome"/>
</dbReference>
<dbReference type="GO" id="GO:0042601">
    <property type="term" value="C:endospore-forming forespore"/>
    <property type="evidence" value="ECO:0007669"/>
    <property type="project" value="InterPro"/>
</dbReference>
<dbReference type="GO" id="GO:0030436">
    <property type="term" value="P:asexual sporulation"/>
    <property type="evidence" value="ECO:0007669"/>
    <property type="project" value="UniProtKB-UniRule"/>
</dbReference>
<dbReference type="GO" id="GO:0030435">
    <property type="term" value="P:sporulation resulting in formation of a cellular spore"/>
    <property type="evidence" value="ECO:0007669"/>
    <property type="project" value="UniProtKB-KW"/>
</dbReference>
<dbReference type="HAMAP" id="MF_00665">
    <property type="entry name" value="SspO"/>
    <property type="match status" value="1"/>
</dbReference>
<dbReference type="InterPro" id="IPR012613">
    <property type="entry name" value="SASP_SspO"/>
</dbReference>
<dbReference type="NCBIfam" id="TIGR02864">
    <property type="entry name" value="spore_sspO"/>
    <property type="match status" value="1"/>
</dbReference>
<dbReference type="Pfam" id="PF08175">
    <property type="entry name" value="SspO"/>
    <property type="match status" value="1"/>
</dbReference>
<sequence length="49" mass="5390">MGKRKANHTISGMNAASAQGQGAGYNEEFANENLTPAERQNNKKRKKNQ</sequence>
<organism>
    <name type="scientific">Bacillus anthracis</name>
    <dbReference type="NCBI Taxonomy" id="1392"/>
    <lineage>
        <taxon>Bacteria</taxon>
        <taxon>Bacillati</taxon>
        <taxon>Bacillota</taxon>
        <taxon>Bacilli</taxon>
        <taxon>Bacillales</taxon>
        <taxon>Bacillaceae</taxon>
        <taxon>Bacillus</taxon>
        <taxon>Bacillus cereus group</taxon>
    </lineage>
</organism>
<name>SSPO_BACAN</name>
<keyword id="KW-1185">Reference proteome</keyword>
<keyword id="KW-0749">Sporulation</keyword>
<reference key="1">
    <citation type="journal article" date="2003" name="Nature">
        <title>The genome sequence of Bacillus anthracis Ames and comparison to closely related bacteria.</title>
        <authorList>
            <person name="Read T.D."/>
            <person name="Peterson S.N."/>
            <person name="Tourasse N.J."/>
            <person name="Baillie L.W."/>
            <person name="Paulsen I.T."/>
            <person name="Nelson K.E."/>
            <person name="Tettelin H."/>
            <person name="Fouts D.E."/>
            <person name="Eisen J.A."/>
            <person name="Gill S.R."/>
            <person name="Holtzapple E.K."/>
            <person name="Okstad O.A."/>
            <person name="Helgason E."/>
            <person name="Rilstone J."/>
            <person name="Wu M."/>
            <person name="Kolonay J.F."/>
            <person name="Beanan M.J."/>
            <person name="Dodson R.J."/>
            <person name="Brinkac L.M."/>
            <person name="Gwinn M.L."/>
            <person name="DeBoy R.T."/>
            <person name="Madpu R."/>
            <person name="Daugherty S.C."/>
            <person name="Durkin A.S."/>
            <person name="Haft D.H."/>
            <person name="Nelson W.C."/>
            <person name="Peterson J.D."/>
            <person name="Pop M."/>
            <person name="Khouri H.M."/>
            <person name="Radune D."/>
            <person name="Benton J.L."/>
            <person name="Mahamoud Y."/>
            <person name="Jiang L."/>
            <person name="Hance I.R."/>
            <person name="Weidman J.F."/>
            <person name="Berry K.J."/>
            <person name="Plaut R.D."/>
            <person name="Wolf A.M."/>
            <person name="Watkins K.L."/>
            <person name="Nierman W.C."/>
            <person name="Hazen A."/>
            <person name="Cline R.T."/>
            <person name="Redmond C."/>
            <person name="Thwaite J.E."/>
            <person name="White O."/>
            <person name="Salzberg S.L."/>
            <person name="Thomason B."/>
            <person name="Friedlander A.M."/>
            <person name="Koehler T.M."/>
            <person name="Hanna P.C."/>
            <person name="Kolstoe A.-B."/>
            <person name="Fraser C.M."/>
        </authorList>
    </citation>
    <scope>NUCLEOTIDE SEQUENCE [LARGE SCALE GENOMIC DNA]</scope>
    <source>
        <strain>Ames / isolate Porton</strain>
    </source>
</reference>
<reference key="2">
    <citation type="journal article" date="2009" name="J. Bacteriol.">
        <title>The complete genome sequence of Bacillus anthracis Ames 'Ancestor'.</title>
        <authorList>
            <person name="Ravel J."/>
            <person name="Jiang L."/>
            <person name="Stanley S.T."/>
            <person name="Wilson M.R."/>
            <person name="Decker R.S."/>
            <person name="Read T.D."/>
            <person name="Worsham P."/>
            <person name="Keim P.S."/>
            <person name="Salzberg S.L."/>
            <person name="Fraser-Liggett C.M."/>
            <person name="Rasko D.A."/>
        </authorList>
    </citation>
    <scope>NUCLEOTIDE SEQUENCE [LARGE SCALE GENOMIC DNA]</scope>
    <source>
        <strain>Ames ancestor</strain>
    </source>
</reference>
<reference key="3">
    <citation type="submission" date="2004-01" db="EMBL/GenBank/DDBJ databases">
        <title>Complete genome sequence of Bacillus anthracis Sterne.</title>
        <authorList>
            <person name="Brettin T.S."/>
            <person name="Bruce D."/>
            <person name="Challacombe J.F."/>
            <person name="Gilna P."/>
            <person name="Han C."/>
            <person name="Hill K."/>
            <person name="Hitchcock P."/>
            <person name="Jackson P."/>
            <person name="Keim P."/>
            <person name="Longmire J."/>
            <person name="Lucas S."/>
            <person name="Okinaka R."/>
            <person name="Richardson P."/>
            <person name="Rubin E."/>
            <person name="Tice H."/>
        </authorList>
    </citation>
    <scope>NUCLEOTIDE SEQUENCE [LARGE SCALE GENOMIC DNA]</scope>
    <source>
        <strain>Sterne</strain>
    </source>
</reference>
<feature type="chain" id="PRO_0000217203" description="Small, acid-soluble spore protein O">
    <location>
        <begin position="1"/>
        <end position="49"/>
    </location>
</feature>
<feature type="region of interest" description="Disordered" evidence="2">
    <location>
        <begin position="1"/>
        <end position="49"/>
    </location>
</feature>
<feature type="compositionally biased region" description="Polar residues" evidence="2">
    <location>
        <begin position="8"/>
        <end position="20"/>
    </location>
</feature>
<proteinExistence type="inferred from homology"/>
<evidence type="ECO:0000255" key="1">
    <source>
        <dbReference type="HAMAP-Rule" id="MF_00665"/>
    </source>
</evidence>
<evidence type="ECO:0000256" key="2">
    <source>
        <dbReference type="SAM" id="MobiDB-lite"/>
    </source>
</evidence>
<comment type="subcellular location">
    <subcellularLocation>
        <location evidence="1">Spore core</location>
    </subcellularLocation>
</comment>
<comment type="induction">
    <text evidence="1">Expressed only in the forespore compartment of sporulating cells.</text>
</comment>
<comment type="similarity">
    <text evidence="1">Belongs to the SspO family.</text>
</comment>
<gene>
    <name evidence="1" type="primary">sspO</name>
    <name type="synonym">cotK</name>
    <name type="ordered locus">BA_3678</name>
    <name type="ordered locus">GBAA_3678</name>
    <name type="ordered locus">BAS3409</name>
</gene>
<accession>Q81Y79</accession>
<accession>Q6HVH3</accession>
<accession>Q6KPP3</accession>
<protein>
    <recommendedName>
        <fullName evidence="1">Small, acid-soluble spore protein O</fullName>
        <shortName evidence="1">SASP O</shortName>
    </recommendedName>
</protein>